<evidence type="ECO:0000255" key="1"/>
<evidence type="ECO:0000255" key="2">
    <source>
        <dbReference type="PROSITE-ProRule" id="PRU00251"/>
    </source>
</evidence>
<evidence type="ECO:0000255" key="3">
    <source>
        <dbReference type="PROSITE-ProRule" id="PRU00629"/>
    </source>
</evidence>
<evidence type="ECO:0000269" key="4">
    <source>
    </source>
</evidence>
<evidence type="ECO:0000269" key="5">
    <source>
    </source>
</evidence>
<evidence type="ECO:0000269" key="6">
    <source>
    </source>
</evidence>
<evidence type="ECO:0000269" key="7">
    <source>
    </source>
</evidence>
<evidence type="ECO:0000269" key="8">
    <source>
    </source>
</evidence>
<evidence type="ECO:0000269" key="9">
    <source>
    </source>
</evidence>
<evidence type="ECO:0000269" key="10">
    <source>
    </source>
</evidence>
<evidence type="ECO:0000269" key="11">
    <source>
    </source>
</evidence>
<evidence type="ECO:0000269" key="12">
    <source ref="8"/>
</evidence>
<evidence type="ECO:0000305" key="13"/>
<proteinExistence type="evidence at protein level"/>
<name>AP1_ARATH</name>
<protein>
    <recommendedName>
        <fullName>Floral homeotic protein APETALA 1</fullName>
    </recommendedName>
    <alternativeName>
        <fullName>Agamous-like MADS-box protein AGL7</fullName>
    </alternativeName>
</protein>
<gene>
    <name type="primary">AP1</name>
    <name type="synonym">AGL7</name>
    <name type="ordered locus">At1g69120</name>
    <name type="ORF">F4N2.9</name>
</gene>
<feature type="chain" id="PRO_0000199451" description="Floral homeotic protein APETALA 1">
    <location>
        <begin position="1"/>
        <end position="256"/>
    </location>
</feature>
<feature type="domain" description="MADS-box" evidence="2">
    <location>
        <begin position="1"/>
        <end position="61"/>
    </location>
</feature>
<feature type="domain" description="K-box" evidence="3">
    <location>
        <begin position="88"/>
        <end position="178"/>
    </location>
</feature>
<feature type="coiled-coil region" evidence="1">
    <location>
        <begin position="88"/>
        <end position="185"/>
    </location>
</feature>
<feature type="sequence variant" description="In strain: cv. Chi-1.">
    <original>S</original>
    <variation>P</variation>
    <location>
        <position position="85"/>
    </location>
</feature>
<feature type="sequence variant" description="In strain: cv. Bla-1.">
    <original>M</original>
    <variation>T</variation>
    <location>
        <position position="93"/>
    </location>
</feature>
<feature type="sequence variant" description="In strain: cv. Chi-1.">
    <original>K</original>
    <variation>R</variation>
    <location>
        <position position="99"/>
    </location>
</feature>
<feature type="sequence variant" description="In strain: cv. Landsberg erecta.">
    <original>A</original>
    <variation>T</variation>
    <location>
        <position position="100"/>
    </location>
</feature>
<feature type="sequence variant" description="In strain: cv. Jl-1.">
    <original>M</original>
    <variation>V</variation>
    <location>
        <position position="120"/>
    </location>
</feature>
<feature type="sequence variant" description="In strain: cv. Bla-1.">
    <original>L</original>
    <variation>P</variation>
    <location>
        <position position="125"/>
    </location>
</feature>
<feature type="sequence variant" description="In strain: cv. Jl-1.">
    <original>S</original>
    <variation>G</variation>
    <location>
        <position position="166"/>
    </location>
</feature>
<feature type="sequence variant" description="In strain: cv. Chi-1.">
    <original>L</original>
    <variation>P</variation>
    <location>
        <position position="212"/>
    </location>
</feature>
<feature type="sequence variant" description="In strain: cv. Co-1.">
    <original>A</original>
    <variation>V</variation>
    <location>
        <position position="233"/>
    </location>
</feature>
<feature type="sequence conflict" description="In Ref. 5; BAD43696." evidence="13" ref="5">
    <original>I</original>
    <variation>M</variation>
    <location>
        <position position="139"/>
    </location>
</feature>
<feature type="sequence conflict" description="In Ref. 7; AAM28458." evidence="13" ref="7">
    <original>E</original>
    <variation>G</variation>
    <location>
        <position position="184"/>
    </location>
</feature>
<feature type="sequence conflict" description="In Ref. 6; AAM65504." evidence="13" ref="6">
    <original>Q</original>
    <variation>H</variation>
    <location>
        <position position="189"/>
    </location>
</feature>
<feature type="sequence conflict" description="In Ref. 1; CAA78909." evidence="13" ref="1">
    <location>
        <position position="236"/>
    </location>
</feature>
<accession>P35631</accession>
<accession>Q680D4</accession>
<accession>Q8LA98</accession>
<accession>Q9LQA8</accession>
<organism>
    <name type="scientific">Arabidopsis thaliana</name>
    <name type="common">Mouse-ear cress</name>
    <dbReference type="NCBI Taxonomy" id="3702"/>
    <lineage>
        <taxon>Eukaryota</taxon>
        <taxon>Viridiplantae</taxon>
        <taxon>Streptophyta</taxon>
        <taxon>Embryophyta</taxon>
        <taxon>Tracheophyta</taxon>
        <taxon>Spermatophyta</taxon>
        <taxon>Magnoliopsida</taxon>
        <taxon>eudicotyledons</taxon>
        <taxon>Gunneridae</taxon>
        <taxon>Pentapetalae</taxon>
        <taxon>rosids</taxon>
        <taxon>malvids</taxon>
        <taxon>Brassicales</taxon>
        <taxon>Brassicaceae</taxon>
        <taxon>Camelineae</taxon>
        <taxon>Arabidopsis</taxon>
    </lineage>
</organism>
<comment type="function">
    <text evidence="4 8 9 10 12">Transcription factor that promotes early floral meristem identity in synergy with LEAFY. Is required subsequently for the transition of an inflorescence meristem into a floral meristem. Is indispensable for normal development of sepals and petals in flowers. Positively regulates the B class homeotic proteins APETALA3 and PISTILLATA with the cooperation of LEAFY and UFO. Interacts with SEPALLATA3 or AP3/PI heterodimer to form complexes that could be involved in genes regulation during floral meristem development. Positively regulates AGAMOUS in cooperation with LEAFY. Displays a redundant function with CAULIFLOWER in the up-regulation of LEAFY. Together with AGL24 and SVP, controls the identity of the floral meristem and regulates expression of class B, C and E genes. Represses flowering time genes AGL24, SVP and SOC1 in emerging floral meristems.</text>
</comment>
<comment type="subunit">
    <text evidence="5 6 7">Homodimer capable of binding to CArG-box sequences. Heterodimer with SEP3, AP1 and SVP. Binds AP3/PI to form a ternary complex. Interacts with the SEU-LUG corepressor complex when complexed to AGL24 or SVP. Interacts with AGL15 and AGL16 (PubMed:15805477, PubMed:16679456). Interacts with TT16/AGL32 (PubMed:16080001).</text>
</comment>
<comment type="interaction">
    <interactant intactId="EBI-592003">
        <id>P35631</id>
    </interactant>
    <interactant intactId="EBI-621986">
        <id>Q9SZJ6</id>
        <label>AGL21</label>
    </interactant>
    <organismsDiffer>false</organismsDiffer>
    <experiments>4</experiments>
</comment>
<comment type="interaction">
    <interactant intactId="EBI-592003">
        <id>P35631</id>
    </interactant>
    <interactant intactId="EBI-592083">
        <id>O82794</id>
        <label>AGL24</label>
    </interactant>
    <organismsDiffer>false</organismsDiffer>
    <experiments>4</experiments>
</comment>
<comment type="interaction">
    <interactant intactId="EBI-592003">
        <id>P35631</id>
    </interactant>
    <interactant intactId="EBI-632935">
        <id>P29382</id>
        <label>SEP1</label>
    </interactant>
    <organismsDiffer>false</organismsDiffer>
    <experiments>4</experiments>
</comment>
<comment type="interaction">
    <interactant intactId="EBI-592003">
        <id>P35631</id>
    </interactant>
    <interactant intactId="EBI-592020">
        <id>O22456</id>
        <label>SEP3</label>
    </interactant>
    <organismsDiffer>false</organismsDiffer>
    <experiments>4</experiments>
</comment>
<comment type="interaction">
    <interactant intactId="EBI-592003">
        <id>P35631</id>
    </interactant>
    <interactant intactId="EBI-1771131">
        <id>Q8W234</id>
        <label>SEU</label>
    </interactant>
    <organismsDiffer>false</organismsDiffer>
    <experiments>2</experiments>
</comment>
<comment type="interaction">
    <interactant intactId="EBI-592003">
        <id>P35631</id>
    </interactant>
    <interactant intactId="EBI-592041">
        <id>O64645</id>
        <label>SOC1</label>
    </interactant>
    <organismsDiffer>false</organismsDiffer>
    <experiments>5</experiments>
</comment>
<comment type="interaction">
    <interactant intactId="EBI-592003">
        <id>P35631</id>
    </interactant>
    <interactant intactId="EBI-592058">
        <id>Q9FVC1</id>
        <label>SVP</label>
    </interactant>
    <organismsDiffer>false</organismsDiffer>
    <experiments>5</experiments>
</comment>
<comment type="interaction">
    <interactant intactId="EBI-592003">
        <id>P35631</id>
    </interactant>
    <interactant intactId="EBI-4424563">
        <id>Q93Z00</id>
        <label>TCP14</label>
    </interactant>
    <organismsDiffer>false</organismsDiffer>
    <experiments>3</experiments>
</comment>
<comment type="interaction">
    <interactant intactId="EBI-592003">
        <id>P35631</id>
    </interactant>
    <interactant intactId="EBI-4426144">
        <id>Q9C9L2</id>
        <label>TCP15</label>
    </interactant>
    <organismsDiffer>false</organismsDiffer>
    <experiments>3</experiments>
</comment>
<comment type="interaction">
    <interactant intactId="EBI-592003">
        <id>P35631</id>
    </interactant>
    <interactant intactId="EBI-15192325">
        <id>Q8LPR5</id>
        <label>TCP4</label>
    </interactant>
    <organismsDiffer>false</organismsDiffer>
    <experiments>3</experiments>
</comment>
<comment type="interaction">
    <interactant intactId="EBI-592003">
        <id>P35631</id>
    </interactant>
    <interactant intactId="EBI-16100490">
        <id>Q2NJQ2</id>
        <label>AYWB_224</label>
    </interactant>
    <organismsDiffer>true</organismsDiffer>
    <experiments>4</experiments>
</comment>
<comment type="subcellular location">
    <subcellularLocation>
        <location>Nucleus</location>
    </subcellularLocation>
</comment>
<comment type="tissue specificity">
    <text>Expressed in young flower primordia, later becomes localized to sepals and petals.</text>
</comment>
<comment type="developmental stage">
    <text>Expressed at an early stage of floral initiation.</text>
</comment>
<comment type="induction">
    <text evidence="11">Negatively regulated by TFL1 and by the C class floral homeotic protein AGAMOUS. Positively regulated by CAULIFLOWER.</text>
</comment>
<comment type="disruption phenotype">
    <text evidence="8">Partial conversion of flowers into shoots and a disruption of sepal and petal development.</text>
</comment>
<keyword id="KW-0010">Activator</keyword>
<keyword id="KW-0175">Coiled coil</keyword>
<keyword id="KW-0217">Developmental protein</keyword>
<keyword id="KW-0221">Differentiation</keyword>
<keyword id="KW-0238">DNA-binding</keyword>
<keyword id="KW-0287">Flowering</keyword>
<keyword id="KW-0539">Nucleus</keyword>
<keyword id="KW-1185">Reference proteome</keyword>
<keyword id="KW-0804">Transcription</keyword>
<keyword id="KW-0805">Transcription regulation</keyword>
<sequence length="256" mass="30182">MGRGRVQLKRIENKINRQVTFSKRRAGLLKKAHEISVLCDAEVALVVFSHKGKLFEYSTDSCMEKILERYERYSYAERQLIAPESDVNTNWSMEYNRLKAKIELLERNQRHYLGEDLQAMSPKELQNLEQQLDTALKHIRTRKNQLMYESINELQKKEKAIQEQNSMLSKQIKEREKILRAQQEQWDQQNQGHNMPPPLPPQQHQIQHPYMLSHQPSPFLNMGGLYQEDDPMAMRRNDLELTLEPVYNCNLGCFAA</sequence>
<reference key="1">
    <citation type="journal article" date="1992" name="Nature">
        <title>Molecular characterization of the Arabidopsis floral homeotic gene APETALA1.</title>
        <authorList>
            <person name="Mandel M.A."/>
            <person name="Gustafson-Brown C."/>
            <person name="Savidge B."/>
            <person name="Yanofsky M.F."/>
        </authorList>
    </citation>
    <scope>NUCLEOTIDE SEQUENCE [MRNA]</scope>
    <source>
        <strain>cv. Landsberg erecta</strain>
    </source>
</reference>
<reference key="2">
    <citation type="journal article" date="2000" name="Nature">
        <title>Sequence and analysis of chromosome 1 of the plant Arabidopsis thaliana.</title>
        <authorList>
            <person name="Theologis A."/>
            <person name="Ecker J.R."/>
            <person name="Palm C.J."/>
            <person name="Federspiel N.A."/>
            <person name="Kaul S."/>
            <person name="White O."/>
            <person name="Alonso J."/>
            <person name="Altafi H."/>
            <person name="Araujo R."/>
            <person name="Bowman C.L."/>
            <person name="Brooks S.Y."/>
            <person name="Buehler E."/>
            <person name="Chan A."/>
            <person name="Chao Q."/>
            <person name="Chen H."/>
            <person name="Cheuk R.F."/>
            <person name="Chin C.W."/>
            <person name="Chung M.K."/>
            <person name="Conn L."/>
            <person name="Conway A.B."/>
            <person name="Conway A.R."/>
            <person name="Creasy T.H."/>
            <person name="Dewar K."/>
            <person name="Dunn P."/>
            <person name="Etgu P."/>
            <person name="Feldblyum T.V."/>
            <person name="Feng J.-D."/>
            <person name="Fong B."/>
            <person name="Fujii C.Y."/>
            <person name="Gill J.E."/>
            <person name="Goldsmith A.D."/>
            <person name="Haas B."/>
            <person name="Hansen N.F."/>
            <person name="Hughes B."/>
            <person name="Huizar L."/>
            <person name="Hunter J.L."/>
            <person name="Jenkins J."/>
            <person name="Johnson-Hopson C."/>
            <person name="Khan S."/>
            <person name="Khaykin E."/>
            <person name="Kim C.J."/>
            <person name="Koo H.L."/>
            <person name="Kremenetskaia I."/>
            <person name="Kurtz D.B."/>
            <person name="Kwan A."/>
            <person name="Lam B."/>
            <person name="Langin-Hooper S."/>
            <person name="Lee A."/>
            <person name="Lee J.M."/>
            <person name="Lenz C.A."/>
            <person name="Li J.H."/>
            <person name="Li Y.-P."/>
            <person name="Lin X."/>
            <person name="Liu S.X."/>
            <person name="Liu Z.A."/>
            <person name="Luros J.S."/>
            <person name="Maiti R."/>
            <person name="Marziali A."/>
            <person name="Militscher J."/>
            <person name="Miranda M."/>
            <person name="Nguyen M."/>
            <person name="Nierman W.C."/>
            <person name="Osborne B.I."/>
            <person name="Pai G."/>
            <person name="Peterson J."/>
            <person name="Pham P.K."/>
            <person name="Rizzo M."/>
            <person name="Rooney T."/>
            <person name="Rowley D."/>
            <person name="Sakano H."/>
            <person name="Salzberg S.L."/>
            <person name="Schwartz J.R."/>
            <person name="Shinn P."/>
            <person name="Southwick A.M."/>
            <person name="Sun H."/>
            <person name="Tallon L.J."/>
            <person name="Tambunga G."/>
            <person name="Toriumi M.J."/>
            <person name="Town C.D."/>
            <person name="Utterback T."/>
            <person name="Van Aken S."/>
            <person name="Vaysberg M."/>
            <person name="Vysotskaia V.S."/>
            <person name="Walker M."/>
            <person name="Wu D."/>
            <person name="Yu G."/>
            <person name="Fraser C.M."/>
            <person name="Venter J.C."/>
            <person name="Davis R.W."/>
        </authorList>
    </citation>
    <scope>NUCLEOTIDE SEQUENCE [LARGE SCALE GENOMIC DNA]</scope>
    <source>
        <strain>cv. Columbia</strain>
    </source>
</reference>
<reference key="3">
    <citation type="journal article" date="2017" name="Plant J.">
        <title>Araport11: a complete reannotation of the Arabidopsis thaliana reference genome.</title>
        <authorList>
            <person name="Cheng C.Y."/>
            <person name="Krishnakumar V."/>
            <person name="Chan A.P."/>
            <person name="Thibaud-Nissen F."/>
            <person name="Schobel S."/>
            <person name="Town C.D."/>
        </authorList>
    </citation>
    <scope>GENOME REANNOTATION</scope>
    <source>
        <strain>cv. Columbia</strain>
    </source>
</reference>
<reference key="4">
    <citation type="journal article" date="2003" name="Science">
        <title>Empirical analysis of transcriptional activity in the Arabidopsis genome.</title>
        <authorList>
            <person name="Yamada K."/>
            <person name="Lim J."/>
            <person name="Dale J.M."/>
            <person name="Chen H."/>
            <person name="Shinn P."/>
            <person name="Palm C.J."/>
            <person name="Southwick A.M."/>
            <person name="Wu H.C."/>
            <person name="Kim C.J."/>
            <person name="Nguyen M."/>
            <person name="Pham P.K."/>
            <person name="Cheuk R.F."/>
            <person name="Karlin-Newmann G."/>
            <person name="Liu S.X."/>
            <person name="Lam B."/>
            <person name="Sakano H."/>
            <person name="Wu T."/>
            <person name="Yu G."/>
            <person name="Miranda M."/>
            <person name="Quach H.L."/>
            <person name="Tripp M."/>
            <person name="Chang C.H."/>
            <person name="Lee J.M."/>
            <person name="Toriumi M.J."/>
            <person name="Chan M.M."/>
            <person name="Tang C.C."/>
            <person name="Onodera C.S."/>
            <person name="Deng J.M."/>
            <person name="Akiyama K."/>
            <person name="Ansari Y."/>
            <person name="Arakawa T."/>
            <person name="Banh J."/>
            <person name="Banno F."/>
            <person name="Bowser L."/>
            <person name="Brooks S.Y."/>
            <person name="Carninci P."/>
            <person name="Chao Q."/>
            <person name="Choy N."/>
            <person name="Enju A."/>
            <person name="Goldsmith A.D."/>
            <person name="Gurjal M."/>
            <person name="Hansen N.F."/>
            <person name="Hayashizaki Y."/>
            <person name="Johnson-Hopson C."/>
            <person name="Hsuan V.W."/>
            <person name="Iida K."/>
            <person name="Karnes M."/>
            <person name="Khan S."/>
            <person name="Koesema E."/>
            <person name="Ishida J."/>
            <person name="Jiang P.X."/>
            <person name="Jones T."/>
            <person name="Kawai J."/>
            <person name="Kamiya A."/>
            <person name="Meyers C."/>
            <person name="Nakajima M."/>
            <person name="Narusaka M."/>
            <person name="Seki M."/>
            <person name="Sakurai T."/>
            <person name="Satou M."/>
            <person name="Tamse R."/>
            <person name="Vaysberg M."/>
            <person name="Wallender E.K."/>
            <person name="Wong C."/>
            <person name="Yamamura Y."/>
            <person name="Yuan S."/>
            <person name="Shinozaki K."/>
            <person name="Davis R.W."/>
            <person name="Theologis A."/>
            <person name="Ecker J.R."/>
        </authorList>
    </citation>
    <scope>NUCLEOTIDE SEQUENCE [LARGE SCALE MRNA]</scope>
    <source>
        <strain>cv. Columbia</strain>
    </source>
</reference>
<reference key="5">
    <citation type="submission" date="2004-09" db="EMBL/GenBank/DDBJ databases">
        <title>Large-scale analysis of RIKEN Arabidopsis full-length (RAFL) cDNAs.</title>
        <authorList>
            <person name="Totoki Y."/>
            <person name="Seki M."/>
            <person name="Ishida J."/>
            <person name="Nakajima M."/>
            <person name="Enju A."/>
            <person name="Kamiya A."/>
            <person name="Narusaka M."/>
            <person name="Shin-i T."/>
            <person name="Nakagawa M."/>
            <person name="Sakamoto N."/>
            <person name="Oishi K."/>
            <person name="Kohara Y."/>
            <person name="Kobayashi M."/>
            <person name="Toyoda A."/>
            <person name="Sakaki Y."/>
            <person name="Sakurai T."/>
            <person name="Iida K."/>
            <person name="Akiyama K."/>
            <person name="Satou M."/>
            <person name="Toyoda T."/>
            <person name="Konagaya A."/>
            <person name="Carninci P."/>
            <person name="Kawai J."/>
            <person name="Hayashizaki Y."/>
            <person name="Shinozaki K."/>
        </authorList>
    </citation>
    <scope>NUCLEOTIDE SEQUENCE [LARGE SCALE MRNA]</scope>
    <source>
        <strain>cv. Columbia</strain>
    </source>
</reference>
<reference key="6">
    <citation type="submission" date="2002-03" db="EMBL/GenBank/DDBJ databases">
        <title>Full-length cDNA from Arabidopsis thaliana.</title>
        <authorList>
            <person name="Brover V.V."/>
            <person name="Troukhan M.E."/>
            <person name="Alexandrov N.A."/>
            <person name="Lu Y.-P."/>
            <person name="Flavell R.B."/>
            <person name="Feldmann K.A."/>
        </authorList>
    </citation>
    <scope>NUCLEOTIDE SEQUENCE [LARGE SCALE MRNA]</scope>
</reference>
<reference key="7">
    <citation type="journal article" date="2002" name="Genetics">
        <title>Contrasting evolutionary forces in the Arabidopsis thaliana floral developmental pathway.</title>
        <authorList>
            <person name="Olsen K.M."/>
            <person name="Womack A."/>
            <person name="Garrett A.R."/>
            <person name="Suddith J.I."/>
            <person name="Purugganan M.D."/>
        </authorList>
    </citation>
    <scope>NUCLEOTIDE SEQUENCE [GENOMIC DNA] OF 1-251</scope>
    <scope>VARIANTS</scope>
    <source>
        <strain>cv. Bla-1</strain>
        <strain>cv. Bretagny</strain>
        <strain>cv. Bs-1</strain>
        <strain>cv. Bu-0</strain>
        <strain>cv. Bu-2</strain>
        <strain>cv. Chi-1</strain>
        <strain>cv. Co-1</strain>
        <strain>cv. Columbia</strain>
        <strain>cv. Cvi-0</strain>
        <strain>cv. Gr-3</strain>
        <strain>cv. Ita-0</strain>
        <strain>cv. Jl-1</strain>
        <strain>cv. Kas-1</strain>
        <strain>cv. Kent</strain>
        <strain>cv. Landsberg erecta</strain>
        <strain>cv. Li-3</strain>
        <strain>cv. Li-8</strain>
        <strain>cv. Lisse</strain>
        <strain>cv. Wassilewskija</strain>
    </source>
</reference>
<reference key="8">
    <citation type="journal article" date="1993" name="Development">
        <title>Control of flower development in Arabidopsis thaliana by APETALA1 and interacting genes.</title>
        <authorList>
            <person name="Bowman J.L."/>
            <person name="Alvarez J."/>
            <person name="Weigel D."/>
            <person name="Meyerowitz E.M."/>
            <person name="Smyth D.R."/>
        </authorList>
    </citation>
    <scope>FUNCTION</scope>
</reference>
<reference key="9">
    <citation type="journal article" date="1993" name="Science">
        <title>Activation of floral homeotic genes in Arabidopsis.</title>
        <authorList>
            <person name="Weigel D."/>
            <person name="Meyerowitz E.M."/>
        </authorList>
    </citation>
    <scope>FUNCTION</scope>
</reference>
<reference key="10">
    <citation type="journal article" date="1996" name="Proc. Natl. Acad. Sci. U.S.A.">
        <title>Dimerization specificity of Arabidopsis MADS domain homeotic proteins APETALA1, APETALA3, PISTILLATA, and AGAMOUS.</title>
        <authorList>
            <person name="Riechmann J.L."/>
            <person name="Krizek B.A."/>
            <person name="Meyerowitz E.M."/>
        </authorList>
    </citation>
    <scope>CHARACTERIZATION</scope>
</reference>
<reference key="11">
    <citation type="journal article" date="1998" name="Nature">
        <title>A genetic framework for floral patterning.</title>
        <authorList>
            <person name="Parcy F."/>
            <person name="Nilsson O."/>
            <person name="Busch M.A."/>
            <person name="Lee I."/>
            <person name="Weigel D."/>
        </authorList>
    </citation>
    <scope>INDUCTION</scope>
</reference>
<reference key="12">
    <citation type="journal article" date="2001" name="Plant Cell">
        <title>Activation of the Arabidopsis B class homeotic genes by APETALA1.</title>
        <authorList>
            <person name="Ng M."/>
            <person name="Yanofsky M.F."/>
        </authorList>
    </citation>
    <scope>FUNCTION</scope>
</reference>
<reference key="13">
    <citation type="journal article" date="2001" name="Nature">
        <title>Complexes of MADS-box proteins are sufficient to convert leaves into floral organs.</title>
        <authorList>
            <person name="Honma T."/>
            <person name="Goto K."/>
        </authorList>
    </citation>
    <scope>CHARACTERIZATION</scope>
</reference>
<reference key="14">
    <citation type="journal article" date="2005" name="Mol. Genet. Genomics">
        <title>Mutant analysis, protein-protein interactions and subcellular localization of the Arabidopsis B sister (ABS) protein.</title>
        <authorList>
            <person name="Kaufmann K."/>
            <person name="Anfang N."/>
            <person name="Saedler H."/>
            <person name="Theissen G."/>
        </authorList>
    </citation>
    <scope>INTERACTION WITH TT16/AGL32</scope>
</reference>
<reference key="15">
    <citation type="journal article" date="2005" name="Plant Cell">
        <title>Comprehensive interaction map of the Arabidopsis MADS Box transcription factors.</title>
        <authorList>
            <person name="de Folter S."/>
            <person name="Immink R.G.H."/>
            <person name="Kieffer M."/>
            <person name="Parenicova L."/>
            <person name="Henz S.R."/>
            <person name="Weigel D."/>
            <person name="Busscher M."/>
            <person name="Kooiker M."/>
            <person name="Colombo L."/>
            <person name="Kater M.M."/>
            <person name="Davies B."/>
            <person name="Angenent G.C."/>
        </authorList>
    </citation>
    <scope>INTERACTION WITH AGL15 AND AGL16</scope>
</reference>
<reference key="16">
    <citation type="journal article" date="2006" name="Plant Cell">
        <title>AGL24, SHORT VEGETATIVE PHASE, and APETALA1 redundantly control AGAMOUS during early stages of flower development in Arabidopsis.</title>
        <authorList>
            <person name="Gregis V."/>
            <person name="Sessa A."/>
            <person name="Colombo L."/>
            <person name="Kater M.M."/>
        </authorList>
    </citation>
    <scope>INTERACTION WITH AGL24; SVP AND SEU-LUG</scope>
</reference>
<reference key="17">
    <citation type="journal article" date="2007" name="Development">
        <title>Specification of Arabidopsis floral meristem identity by repression of flowering time genes.</title>
        <authorList>
            <person name="Liu C."/>
            <person name="Zhou J."/>
            <person name="Bracha-Drori K."/>
            <person name="Yalovsky S."/>
            <person name="Ito T."/>
            <person name="Yu H."/>
        </authorList>
    </citation>
    <scope>FUNCTION</scope>
    <scope>DISRUPTION PHENOTYPE</scope>
</reference>
<reference key="18">
    <citation type="journal article" date="2009" name="Plant J.">
        <title>The Arabidopsis floral meristem identity genes AP1, AGL24 and SVP directly repress class B and C floral homeotic genes.</title>
        <authorList>
            <person name="Gregis V."/>
            <person name="Sessa A."/>
            <person name="Dorca-Fornell C."/>
            <person name="Kater M.M."/>
        </authorList>
    </citation>
    <scope>FUNCTION</scope>
</reference>
<dbReference type="EMBL" id="Z16421">
    <property type="protein sequence ID" value="CAA78909.1"/>
    <property type="molecule type" value="mRNA"/>
</dbReference>
<dbReference type="EMBL" id="AC008262">
    <property type="protein sequence ID" value="AAF27070.1"/>
    <property type="molecule type" value="Genomic_DNA"/>
</dbReference>
<dbReference type="EMBL" id="CP002684">
    <property type="protein sequence ID" value="AEE34887.1"/>
    <property type="molecule type" value="Genomic_DNA"/>
</dbReference>
<dbReference type="EMBL" id="BT004113">
    <property type="protein sequence ID" value="AAO42136.1"/>
    <property type="molecule type" value="mRNA"/>
</dbReference>
<dbReference type="EMBL" id="BT004951">
    <property type="protein sequence ID" value="AAO50484.1"/>
    <property type="molecule type" value="mRNA"/>
</dbReference>
<dbReference type="EMBL" id="AK175933">
    <property type="protein sequence ID" value="BAD43696.1"/>
    <property type="molecule type" value="mRNA"/>
</dbReference>
<dbReference type="EMBL" id="AY087956">
    <property type="protein sequence ID" value="AAM65504.1"/>
    <property type="molecule type" value="mRNA"/>
</dbReference>
<dbReference type="EMBL" id="AF466771">
    <property type="protein sequence ID" value="AAM28447.1"/>
    <property type="molecule type" value="Genomic_DNA"/>
</dbReference>
<dbReference type="EMBL" id="AF466772">
    <property type="protein sequence ID" value="AAM28448.1"/>
    <property type="molecule type" value="Genomic_DNA"/>
</dbReference>
<dbReference type="EMBL" id="AF466773">
    <property type="protein sequence ID" value="AAM28449.1"/>
    <property type="molecule type" value="Genomic_DNA"/>
</dbReference>
<dbReference type="EMBL" id="AF466774">
    <property type="protein sequence ID" value="AAM28450.1"/>
    <property type="molecule type" value="Genomic_DNA"/>
</dbReference>
<dbReference type="EMBL" id="AF466775">
    <property type="protein sequence ID" value="AAM28451.1"/>
    <property type="molecule type" value="Genomic_DNA"/>
</dbReference>
<dbReference type="EMBL" id="AF466776">
    <property type="protein sequence ID" value="AAM28452.1"/>
    <property type="molecule type" value="Genomic_DNA"/>
</dbReference>
<dbReference type="EMBL" id="AF466777">
    <property type="protein sequence ID" value="AAM28453.1"/>
    <property type="molecule type" value="Genomic_DNA"/>
</dbReference>
<dbReference type="EMBL" id="AF466778">
    <property type="protein sequence ID" value="AAM28454.1"/>
    <property type="molecule type" value="Genomic_DNA"/>
</dbReference>
<dbReference type="EMBL" id="AF466779">
    <property type="protein sequence ID" value="AAM28455.1"/>
    <property type="molecule type" value="Genomic_DNA"/>
</dbReference>
<dbReference type="EMBL" id="AF466780">
    <property type="protein sequence ID" value="AAM28456.1"/>
    <property type="molecule type" value="Genomic_DNA"/>
</dbReference>
<dbReference type="EMBL" id="AF466781">
    <property type="protein sequence ID" value="AAM28457.1"/>
    <property type="molecule type" value="Genomic_DNA"/>
</dbReference>
<dbReference type="EMBL" id="AF466782">
    <property type="protein sequence ID" value="AAM28458.1"/>
    <property type="molecule type" value="Genomic_DNA"/>
</dbReference>
<dbReference type="EMBL" id="AF466783">
    <property type="protein sequence ID" value="AAM28459.1"/>
    <property type="molecule type" value="Genomic_DNA"/>
</dbReference>
<dbReference type="EMBL" id="AF466784">
    <property type="protein sequence ID" value="AAM28460.1"/>
    <property type="molecule type" value="Genomic_DNA"/>
</dbReference>
<dbReference type="EMBL" id="AF466785">
    <property type="protein sequence ID" value="AAM28461.1"/>
    <property type="molecule type" value="Genomic_DNA"/>
</dbReference>
<dbReference type="PIR" id="S27109">
    <property type="entry name" value="S27109"/>
</dbReference>
<dbReference type="RefSeq" id="NP_177074.1">
    <property type="nucleotide sequence ID" value="NM_105581.3"/>
</dbReference>
<dbReference type="SMR" id="P35631"/>
<dbReference type="BioGRID" id="28465">
    <property type="interactions" value="57"/>
</dbReference>
<dbReference type="DIP" id="DIP-33763N"/>
<dbReference type="FunCoup" id="P35631">
    <property type="interactions" value="36"/>
</dbReference>
<dbReference type="IntAct" id="P35631">
    <property type="interactions" value="43"/>
</dbReference>
<dbReference type="STRING" id="3702.P35631"/>
<dbReference type="PaxDb" id="3702-AT1G69120.1"/>
<dbReference type="ProteomicsDB" id="244444"/>
<dbReference type="EnsemblPlants" id="AT1G69120.1">
    <property type="protein sequence ID" value="AT1G69120.1"/>
    <property type="gene ID" value="AT1G69120"/>
</dbReference>
<dbReference type="GeneID" id="843244"/>
<dbReference type="Gramene" id="AT1G69120.1">
    <property type="protein sequence ID" value="AT1G69120.1"/>
    <property type="gene ID" value="AT1G69120"/>
</dbReference>
<dbReference type="KEGG" id="ath:AT1G69120"/>
<dbReference type="Araport" id="AT1G69120"/>
<dbReference type="TAIR" id="AT1G69120">
    <property type="gene designation" value="AP1"/>
</dbReference>
<dbReference type="eggNOG" id="KOG0014">
    <property type="taxonomic scope" value="Eukaryota"/>
</dbReference>
<dbReference type="HOGENOM" id="CLU_053053_0_2_1"/>
<dbReference type="InParanoid" id="P35631"/>
<dbReference type="OrthoDB" id="1898716at2759"/>
<dbReference type="PhylomeDB" id="P35631"/>
<dbReference type="PRO" id="PR:P35631"/>
<dbReference type="Proteomes" id="UP000006548">
    <property type="component" value="Chromosome 1"/>
</dbReference>
<dbReference type="ExpressionAtlas" id="P35631">
    <property type="expression patterns" value="baseline and differential"/>
</dbReference>
<dbReference type="GO" id="GO:0005634">
    <property type="term" value="C:nucleus"/>
    <property type="evidence" value="ECO:0000314"/>
    <property type="project" value="TAIR"/>
</dbReference>
<dbReference type="GO" id="GO:0003677">
    <property type="term" value="F:DNA binding"/>
    <property type="evidence" value="ECO:0000314"/>
    <property type="project" value="TAIR"/>
</dbReference>
<dbReference type="GO" id="GO:0003700">
    <property type="term" value="F:DNA-binding transcription factor activity"/>
    <property type="evidence" value="ECO:0000250"/>
    <property type="project" value="TAIR"/>
</dbReference>
<dbReference type="GO" id="GO:0046982">
    <property type="term" value="F:protein heterodimerization activity"/>
    <property type="evidence" value="ECO:0000353"/>
    <property type="project" value="TAIR"/>
</dbReference>
<dbReference type="GO" id="GO:0000977">
    <property type="term" value="F:RNA polymerase II transcription regulatory region sequence-specific DNA binding"/>
    <property type="evidence" value="ECO:0007669"/>
    <property type="project" value="InterPro"/>
</dbReference>
<dbReference type="GO" id="GO:0000976">
    <property type="term" value="F:transcription cis-regulatory region binding"/>
    <property type="evidence" value="ECO:0000353"/>
    <property type="project" value="TAIR"/>
</dbReference>
<dbReference type="GO" id="GO:0030154">
    <property type="term" value="P:cell differentiation"/>
    <property type="evidence" value="ECO:0007669"/>
    <property type="project" value="UniProtKB-KW"/>
</dbReference>
<dbReference type="GO" id="GO:0010582">
    <property type="term" value="P:floral meristem determinacy"/>
    <property type="evidence" value="ECO:0000316"/>
    <property type="project" value="TAIR"/>
</dbReference>
<dbReference type="GO" id="GO:0009908">
    <property type="term" value="P:flower development"/>
    <property type="evidence" value="ECO:0000315"/>
    <property type="project" value="TAIR"/>
</dbReference>
<dbReference type="GO" id="GO:0009933">
    <property type="term" value="P:meristem structural organization"/>
    <property type="evidence" value="ECO:0000315"/>
    <property type="project" value="TAIR"/>
</dbReference>
<dbReference type="GO" id="GO:0045893">
    <property type="term" value="P:positive regulation of DNA-templated transcription"/>
    <property type="evidence" value="ECO:0000314"/>
    <property type="project" value="TAIR"/>
</dbReference>
<dbReference type="GO" id="GO:0045944">
    <property type="term" value="P:positive regulation of transcription by RNA polymerase II"/>
    <property type="evidence" value="ECO:0007669"/>
    <property type="project" value="InterPro"/>
</dbReference>
<dbReference type="CDD" id="cd00265">
    <property type="entry name" value="MADS_MEF2_like"/>
    <property type="match status" value="1"/>
</dbReference>
<dbReference type="FunFam" id="3.40.1810.10:FF:000003">
    <property type="entry name" value="MADS-box transcription factor MADS-MC"/>
    <property type="match status" value="1"/>
</dbReference>
<dbReference type="Gene3D" id="3.40.1810.10">
    <property type="entry name" value="Transcription factor, MADS-box"/>
    <property type="match status" value="1"/>
</dbReference>
<dbReference type="InterPro" id="IPR050142">
    <property type="entry name" value="MADS-box/MEF2_TF"/>
</dbReference>
<dbReference type="InterPro" id="IPR033896">
    <property type="entry name" value="MEF2-like_N"/>
</dbReference>
<dbReference type="InterPro" id="IPR002487">
    <property type="entry name" value="TF_Kbox"/>
</dbReference>
<dbReference type="InterPro" id="IPR002100">
    <property type="entry name" value="TF_MADSbox"/>
</dbReference>
<dbReference type="InterPro" id="IPR036879">
    <property type="entry name" value="TF_MADSbox_sf"/>
</dbReference>
<dbReference type="PANTHER" id="PTHR48019">
    <property type="entry name" value="SERUM RESPONSE FACTOR HOMOLOG"/>
    <property type="match status" value="1"/>
</dbReference>
<dbReference type="Pfam" id="PF01486">
    <property type="entry name" value="K-box"/>
    <property type="match status" value="1"/>
</dbReference>
<dbReference type="Pfam" id="PF00319">
    <property type="entry name" value="SRF-TF"/>
    <property type="match status" value="1"/>
</dbReference>
<dbReference type="PRINTS" id="PR00404">
    <property type="entry name" value="MADSDOMAIN"/>
</dbReference>
<dbReference type="SMART" id="SM00432">
    <property type="entry name" value="MADS"/>
    <property type="match status" value="1"/>
</dbReference>
<dbReference type="SUPFAM" id="SSF55455">
    <property type="entry name" value="SRF-like"/>
    <property type="match status" value="1"/>
</dbReference>
<dbReference type="PROSITE" id="PS51297">
    <property type="entry name" value="K_BOX"/>
    <property type="match status" value="1"/>
</dbReference>
<dbReference type="PROSITE" id="PS00350">
    <property type="entry name" value="MADS_BOX_1"/>
    <property type="match status" value="1"/>
</dbReference>
<dbReference type="PROSITE" id="PS50066">
    <property type="entry name" value="MADS_BOX_2"/>
    <property type="match status" value="1"/>
</dbReference>